<name>LRIG1_HUMAN</name>
<comment type="function">
    <text evidence="5">Acts as a feedback negative regulator of signaling by receptor tyrosine kinases, through a mechanism that involves enhancement of receptor ubiquitination and accelerated intracellular degradation.</text>
</comment>
<comment type="subunit">
    <text evidence="5 7">Interacts (via extracellular LRR and Ig-like domains) with EGFR/ERBB1, ERBB2, ERBB3 and ERBB4 (via extracellular domain) (PubMed:15282549). The physiological relevance of the interaction is controversial; LRIG1 may have low affinity for EGFR, and interaction may occur only when high levels of both proteins are present (PubMed:25765764).</text>
</comment>
<comment type="interaction">
    <interactant intactId="EBI-2865191">
        <id>Q96JA1</id>
    </interactant>
    <interactant intactId="EBI-518228">
        <id>P22681</id>
        <label>CBL</label>
    </interactant>
    <organismsDiffer>false</organismsDiffer>
    <experiments>2</experiments>
</comment>
<comment type="interaction">
    <interactant intactId="EBI-2865191">
        <id>Q96JA1</id>
    </interactant>
    <interactant intactId="EBI-297353">
        <id>P00533</id>
        <label>EGFR</label>
    </interactant>
    <organismsDiffer>false</organismsDiffer>
    <experiments>6</experiments>
</comment>
<comment type="interaction">
    <interactant intactId="EBI-2865191">
        <id>Q96JA1</id>
    </interactant>
    <interactant intactId="EBI-641062">
        <id>P04626</id>
        <label>ERBB2</label>
    </interactant>
    <organismsDiffer>false</organismsDiffer>
    <experiments>7</experiments>
</comment>
<comment type="interaction">
    <interactant intactId="EBI-2865191">
        <id>Q96JA1</id>
    </interactant>
    <interactant intactId="EBI-720706">
        <id>P21860</id>
        <label>ERBB3</label>
    </interactant>
    <organismsDiffer>false</organismsDiffer>
    <experiments>2</experiments>
</comment>
<comment type="interaction">
    <interactant intactId="EBI-2865191">
        <id>Q96JA1</id>
    </interactant>
    <interactant intactId="EBI-80371">
        <id>Q15303</id>
        <label>ERBB4</label>
    </interactant>
    <organismsDiffer>false</organismsDiffer>
    <experiments>3</experiments>
</comment>
<comment type="interaction">
    <interactant intactId="EBI-2865191">
        <id>Q96JA1</id>
    </interactant>
    <interactant intactId="EBI-9207843">
        <id>Q6UXM1</id>
        <label>LRIG3</label>
    </interactant>
    <organismsDiffer>false</organismsDiffer>
    <experiments>9</experiments>
</comment>
<comment type="interaction">
    <interactant intactId="EBI-13067910">
        <id>Q96JA1-2</id>
    </interactant>
    <interactant intactId="EBI-12135485">
        <id>P41271-2</id>
        <label>NBL1</label>
    </interactant>
    <organismsDiffer>false</organismsDiffer>
    <experiments>3</experiments>
</comment>
<comment type="subcellular location">
    <subcellularLocation>
        <location evidence="5">Cell membrane</location>
        <topology evidence="12">Single-pass type I membrane protein</topology>
    </subcellularLocation>
</comment>
<comment type="alternative products">
    <event type="alternative splicing"/>
    <isoform>
        <id>Q96JA1-1</id>
        <name>1</name>
        <sequence type="displayed"/>
    </isoform>
    <isoform>
        <id>Q96JA1-2</id>
        <name>2</name>
        <sequence type="described" ref="VSP_011730 VSP_011731"/>
    </isoform>
</comment>
<comment type="tissue specificity">
    <text evidence="4">Widely expressed.</text>
</comment>
<comment type="induction">
    <text evidence="5">By EGF.</text>
</comment>
<comment type="domain">
    <text evidence="5 7">Contains LRR and Ig-domains that can mediate low-affinity interaction with EGFR (PubMed:25765764). The LRRs and the Ig-domains are each sufficient for EGFR/ERBB1 binding. This interaction is abolished only when both the LRRs and the Ig-domains are deleted (PubMed:15282549).</text>
</comment>
<comment type="online information" name="Atlas of Genetics and Cytogenetics in Oncology and Haematology">
    <link uri="https://atlasgeneticsoncology.org/gene/41198/LRIG1"/>
</comment>
<dbReference type="EMBL" id="AF381545">
    <property type="protein sequence ID" value="AAK62357.1"/>
    <property type="molecule type" value="mRNA"/>
</dbReference>
<dbReference type="EMBL" id="AB050468">
    <property type="protein sequence ID" value="BAB40659.1"/>
    <property type="molecule type" value="mRNA"/>
</dbReference>
<dbReference type="EMBL" id="BC071561">
    <property type="protein sequence ID" value="AAH71561.1"/>
    <property type="molecule type" value="mRNA"/>
</dbReference>
<dbReference type="EMBL" id="BC014276">
    <property type="protein sequence ID" value="AAH14276.2"/>
    <property type="molecule type" value="mRNA"/>
</dbReference>
<dbReference type="EMBL" id="AL117666">
    <property type="protein sequence ID" value="CAB56036.1"/>
    <property type="molecule type" value="mRNA"/>
</dbReference>
<dbReference type="CCDS" id="CCDS33783.1">
    <molecule id="Q96JA1-1"/>
</dbReference>
<dbReference type="PIR" id="T17346">
    <property type="entry name" value="T17346"/>
</dbReference>
<dbReference type="RefSeq" id="NP_056356.2">
    <molecule id="Q96JA1-1"/>
    <property type="nucleotide sequence ID" value="NM_015541.3"/>
</dbReference>
<dbReference type="PDB" id="4U7L">
    <property type="method" value="X-ray"/>
    <property type="resolution" value="2.30 A"/>
    <property type="chains" value="A=42-494"/>
</dbReference>
<dbReference type="PDB" id="4U7M">
    <property type="method" value="X-ray"/>
    <property type="resolution" value="2.76 A"/>
    <property type="chains" value="A=494-781"/>
</dbReference>
<dbReference type="PDBsum" id="4U7L"/>
<dbReference type="PDBsum" id="4U7M"/>
<dbReference type="SMR" id="Q96JA1"/>
<dbReference type="BioGRID" id="117489">
    <property type="interactions" value="63"/>
</dbReference>
<dbReference type="FunCoup" id="Q96JA1">
    <property type="interactions" value="685"/>
</dbReference>
<dbReference type="IntAct" id="Q96JA1">
    <property type="interactions" value="51"/>
</dbReference>
<dbReference type="STRING" id="9606.ENSP00000273261"/>
<dbReference type="TCDB" id="8.A.43.1.21">
    <property type="family name" value="the neat-domain containing methaemoglobin heme sequestration (n-mhs) family"/>
</dbReference>
<dbReference type="GlyCosmos" id="Q96JA1">
    <property type="glycosylation" value="6 sites, No reported glycans"/>
</dbReference>
<dbReference type="GlyGen" id="Q96JA1">
    <property type="glycosylation" value="13 sites, 2 N-linked glycans (3 sites), 2 O-linked glycans (3 sites)"/>
</dbReference>
<dbReference type="iPTMnet" id="Q96JA1"/>
<dbReference type="PhosphoSitePlus" id="Q96JA1"/>
<dbReference type="SwissPalm" id="Q96JA1"/>
<dbReference type="BioMuta" id="LRIG1"/>
<dbReference type="DMDM" id="143811415"/>
<dbReference type="CPTAC" id="CPTAC-1495"/>
<dbReference type="jPOST" id="Q96JA1"/>
<dbReference type="MassIVE" id="Q96JA1"/>
<dbReference type="PaxDb" id="9606-ENSP00000273261"/>
<dbReference type="PeptideAtlas" id="Q96JA1"/>
<dbReference type="ProteomicsDB" id="76916">
    <molecule id="Q96JA1-1"/>
</dbReference>
<dbReference type="ProteomicsDB" id="76917">
    <molecule id="Q96JA1-2"/>
</dbReference>
<dbReference type="Antibodypedia" id="55087">
    <property type="antibodies" value="209 antibodies from 30 providers"/>
</dbReference>
<dbReference type="DNASU" id="26018"/>
<dbReference type="Ensembl" id="ENST00000273261.8">
    <molecule id="Q96JA1-1"/>
    <property type="protein sequence ID" value="ENSP00000273261.3"/>
    <property type="gene ID" value="ENSG00000144749.14"/>
</dbReference>
<dbReference type="Ensembl" id="ENST00000383703.3">
    <molecule id="Q96JA1-2"/>
    <property type="protein sequence ID" value="ENSP00000373208.3"/>
    <property type="gene ID" value="ENSG00000144749.14"/>
</dbReference>
<dbReference type="GeneID" id="26018"/>
<dbReference type="KEGG" id="hsa:26018"/>
<dbReference type="MANE-Select" id="ENST00000273261.8">
    <property type="protein sequence ID" value="ENSP00000273261.3"/>
    <property type="RefSeq nucleotide sequence ID" value="NM_015541.3"/>
    <property type="RefSeq protein sequence ID" value="NP_056356.2"/>
</dbReference>
<dbReference type="UCSC" id="uc003dmx.4">
    <molecule id="Q96JA1-1"/>
    <property type="organism name" value="human"/>
</dbReference>
<dbReference type="AGR" id="HGNC:17360"/>
<dbReference type="CTD" id="26018"/>
<dbReference type="DisGeNET" id="26018"/>
<dbReference type="GeneCards" id="LRIG1"/>
<dbReference type="HGNC" id="HGNC:17360">
    <property type="gene designation" value="LRIG1"/>
</dbReference>
<dbReference type="HPA" id="ENSG00000144749">
    <property type="expression patterns" value="Tissue enhanced (pancreas)"/>
</dbReference>
<dbReference type="MIM" id="608868">
    <property type="type" value="gene"/>
</dbReference>
<dbReference type="neXtProt" id="NX_Q96JA1"/>
<dbReference type="OpenTargets" id="ENSG00000144749"/>
<dbReference type="PharmGKB" id="PA38450"/>
<dbReference type="VEuPathDB" id="HostDB:ENSG00000144749"/>
<dbReference type="eggNOG" id="KOG4194">
    <property type="taxonomic scope" value="Eukaryota"/>
</dbReference>
<dbReference type="GeneTree" id="ENSGT00940000158502"/>
<dbReference type="HOGENOM" id="CLU_000288_18_24_1"/>
<dbReference type="InParanoid" id="Q96JA1"/>
<dbReference type="OMA" id="CTDCMET"/>
<dbReference type="OrthoDB" id="5917255at2759"/>
<dbReference type="PAN-GO" id="Q96JA1">
    <property type="GO annotations" value="2 GO annotations based on evolutionary models"/>
</dbReference>
<dbReference type="PhylomeDB" id="Q96JA1"/>
<dbReference type="TreeFam" id="TF325380"/>
<dbReference type="PathwayCommons" id="Q96JA1"/>
<dbReference type="Reactome" id="R-HSA-177929">
    <property type="pathway name" value="Signaling by EGFR"/>
</dbReference>
<dbReference type="Reactome" id="R-HSA-6807004">
    <property type="pathway name" value="Negative regulation of MET activity"/>
</dbReference>
<dbReference type="Reactome" id="R-HSA-9725554">
    <property type="pathway name" value="Differentiation of Keratinocytes in Interfollicular Epidermis in Mammalian Skin"/>
</dbReference>
<dbReference type="SignaLink" id="Q96JA1"/>
<dbReference type="SIGNOR" id="Q96JA1"/>
<dbReference type="BioGRID-ORCS" id="26018">
    <property type="hits" value="17 hits in 1146 CRISPR screens"/>
</dbReference>
<dbReference type="ChiTaRS" id="LRIG1">
    <property type="organism name" value="human"/>
</dbReference>
<dbReference type="EvolutionaryTrace" id="Q96JA1"/>
<dbReference type="GeneWiki" id="LRIG1"/>
<dbReference type="GenomeRNAi" id="26018"/>
<dbReference type="Pharos" id="Q96JA1">
    <property type="development level" value="Tbio"/>
</dbReference>
<dbReference type="PRO" id="PR:Q96JA1"/>
<dbReference type="Proteomes" id="UP000005640">
    <property type="component" value="Chromosome 3"/>
</dbReference>
<dbReference type="RNAct" id="Q96JA1">
    <property type="molecule type" value="protein"/>
</dbReference>
<dbReference type="Bgee" id="ENSG00000144749">
    <property type="expression patterns" value="Expressed in secondary oocyte and 211 other cell types or tissues"/>
</dbReference>
<dbReference type="GO" id="GO:0031012">
    <property type="term" value="C:extracellular matrix"/>
    <property type="evidence" value="ECO:0000318"/>
    <property type="project" value="GO_Central"/>
</dbReference>
<dbReference type="GO" id="GO:0005615">
    <property type="term" value="C:extracellular space"/>
    <property type="evidence" value="ECO:0000318"/>
    <property type="project" value="GO_Central"/>
</dbReference>
<dbReference type="GO" id="GO:0005886">
    <property type="term" value="C:plasma membrane"/>
    <property type="evidence" value="ECO:0000304"/>
    <property type="project" value="Reactome"/>
</dbReference>
<dbReference type="GO" id="GO:0022405">
    <property type="term" value="P:hair cycle process"/>
    <property type="evidence" value="ECO:0007669"/>
    <property type="project" value="Ensembl"/>
</dbReference>
<dbReference type="GO" id="GO:0060384">
    <property type="term" value="P:innervation"/>
    <property type="evidence" value="ECO:0007669"/>
    <property type="project" value="Ensembl"/>
</dbReference>
<dbReference type="GO" id="GO:0032474">
    <property type="term" value="P:otolith morphogenesis"/>
    <property type="evidence" value="ECO:0007669"/>
    <property type="project" value="Ensembl"/>
</dbReference>
<dbReference type="GO" id="GO:0007605">
    <property type="term" value="P:sensory perception of sound"/>
    <property type="evidence" value="ECO:0007669"/>
    <property type="project" value="Ensembl"/>
</dbReference>
<dbReference type="CDD" id="cd00096">
    <property type="entry name" value="Ig"/>
    <property type="match status" value="2"/>
</dbReference>
<dbReference type="CDD" id="cd05763">
    <property type="entry name" value="IgI_LRIG1-like"/>
    <property type="match status" value="1"/>
</dbReference>
<dbReference type="FunFam" id="2.60.40.10:FF:000161">
    <property type="entry name" value="Leucine rich repeats and immunoglobulin like domains 2"/>
    <property type="match status" value="1"/>
</dbReference>
<dbReference type="FunFam" id="3.80.10.10:FF:000040">
    <property type="entry name" value="Leucine rich repeats and immunoglobulin like domains 2"/>
    <property type="match status" value="1"/>
</dbReference>
<dbReference type="FunFam" id="2.60.40.10:FF:000150">
    <property type="entry name" value="Leucine rich repeats and immunoglobulin like domains 3"/>
    <property type="match status" value="1"/>
</dbReference>
<dbReference type="FunFam" id="2.60.40.10:FF:000224">
    <property type="entry name" value="Leucine rich repeats and immunoglobulin like domains 3"/>
    <property type="match status" value="1"/>
</dbReference>
<dbReference type="FunFam" id="3.80.10.10:FF:000023">
    <property type="entry name" value="Leucine rich repeats and immunoglobulin like domains 3"/>
    <property type="match status" value="1"/>
</dbReference>
<dbReference type="Gene3D" id="2.60.40.10">
    <property type="entry name" value="Immunoglobulins"/>
    <property type="match status" value="3"/>
</dbReference>
<dbReference type="Gene3D" id="3.80.10.10">
    <property type="entry name" value="Ribonuclease Inhibitor"/>
    <property type="match status" value="2"/>
</dbReference>
<dbReference type="InterPro" id="IPR000483">
    <property type="entry name" value="Cys-rich_flank_reg_C"/>
</dbReference>
<dbReference type="InterPro" id="IPR007110">
    <property type="entry name" value="Ig-like_dom"/>
</dbReference>
<dbReference type="InterPro" id="IPR036179">
    <property type="entry name" value="Ig-like_dom_sf"/>
</dbReference>
<dbReference type="InterPro" id="IPR013783">
    <property type="entry name" value="Ig-like_fold"/>
</dbReference>
<dbReference type="InterPro" id="IPR013098">
    <property type="entry name" value="Ig_I-set"/>
</dbReference>
<dbReference type="InterPro" id="IPR003599">
    <property type="entry name" value="Ig_sub"/>
</dbReference>
<dbReference type="InterPro" id="IPR003598">
    <property type="entry name" value="Ig_sub2"/>
</dbReference>
<dbReference type="InterPro" id="IPR001611">
    <property type="entry name" value="Leu-rich_rpt"/>
</dbReference>
<dbReference type="InterPro" id="IPR025875">
    <property type="entry name" value="Leu-rich_rpt_4"/>
</dbReference>
<dbReference type="InterPro" id="IPR003591">
    <property type="entry name" value="Leu-rich_rpt_typical-subtyp"/>
</dbReference>
<dbReference type="InterPro" id="IPR050467">
    <property type="entry name" value="LRFN"/>
</dbReference>
<dbReference type="InterPro" id="IPR032675">
    <property type="entry name" value="LRR_dom_sf"/>
</dbReference>
<dbReference type="InterPro" id="IPR000372">
    <property type="entry name" value="LRRNT"/>
</dbReference>
<dbReference type="PANTHER" id="PTHR45842:SF22">
    <property type="entry name" value="INSULIN-LIKE GROWTH FACTOR-BINDING PROTEIN COMPLEX ACID LABILE SUBUNIT ISOFORM X1"/>
    <property type="match status" value="1"/>
</dbReference>
<dbReference type="PANTHER" id="PTHR45842">
    <property type="entry name" value="SYNAPTIC ADHESION-LIKE MOLECULE SALM"/>
    <property type="match status" value="1"/>
</dbReference>
<dbReference type="Pfam" id="PF07679">
    <property type="entry name" value="I-set"/>
    <property type="match status" value="2"/>
</dbReference>
<dbReference type="Pfam" id="PF13927">
    <property type="entry name" value="Ig_3"/>
    <property type="match status" value="1"/>
</dbReference>
<dbReference type="Pfam" id="PF12799">
    <property type="entry name" value="LRR_4"/>
    <property type="match status" value="1"/>
</dbReference>
<dbReference type="Pfam" id="PF13855">
    <property type="entry name" value="LRR_8"/>
    <property type="match status" value="4"/>
</dbReference>
<dbReference type="Pfam" id="PF01463">
    <property type="entry name" value="LRRCT"/>
    <property type="match status" value="1"/>
</dbReference>
<dbReference type="SMART" id="SM00409">
    <property type="entry name" value="IG"/>
    <property type="match status" value="3"/>
</dbReference>
<dbReference type="SMART" id="SM00408">
    <property type="entry name" value="IGc2"/>
    <property type="match status" value="3"/>
</dbReference>
<dbReference type="SMART" id="SM00365">
    <property type="entry name" value="LRR_SD22"/>
    <property type="match status" value="5"/>
</dbReference>
<dbReference type="SMART" id="SM00369">
    <property type="entry name" value="LRR_TYP"/>
    <property type="match status" value="14"/>
</dbReference>
<dbReference type="SMART" id="SM00082">
    <property type="entry name" value="LRRCT"/>
    <property type="match status" value="1"/>
</dbReference>
<dbReference type="SMART" id="SM00013">
    <property type="entry name" value="LRRNT"/>
    <property type="match status" value="1"/>
</dbReference>
<dbReference type="SUPFAM" id="SSF48726">
    <property type="entry name" value="Immunoglobulin"/>
    <property type="match status" value="3"/>
</dbReference>
<dbReference type="SUPFAM" id="SSF52058">
    <property type="entry name" value="L domain-like"/>
    <property type="match status" value="2"/>
</dbReference>
<dbReference type="PROSITE" id="PS50835">
    <property type="entry name" value="IG_LIKE"/>
    <property type="match status" value="3"/>
</dbReference>
<dbReference type="PROSITE" id="PS51450">
    <property type="entry name" value="LRR"/>
    <property type="match status" value="14"/>
</dbReference>
<organism>
    <name type="scientific">Homo sapiens</name>
    <name type="common">Human</name>
    <dbReference type="NCBI Taxonomy" id="9606"/>
    <lineage>
        <taxon>Eukaryota</taxon>
        <taxon>Metazoa</taxon>
        <taxon>Chordata</taxon>
        <taxon>Craniata</taxon>
        <taxon>Vertebrata</taxon>
        <taxon>Euteleostomi</taxon>
        <taxon>Mammalia</taxon>
        <taxon>Eutheria</taxon>
        <taxon>Euarchontoglires</taxon>
        <taxon>Primates</taxon>
        <taxon>Haplorrhini</taxon>
        <taxon>Catarrhini</taxon>
        <taxon>Hominidae</taxon>
        <taxon>Homo</taxon>
    </lineage>
</organism>
<protein>
    <recommendedName>
        <fullName>Leucine-rich repeats and immunoglobulin-like domains protein 1</fullName>
        <shortName evidence="10">LIG-1</shortName>
    </recommendedName>
</protein>
<sequence length="1093" mass="119113">MARPVRGGLGAPRRSPCLLLLWLLLLRLEPVTAAAGPRAPCAAACTCAGDSLDCGGRGLAALPGDLPSWTRSLNLSYNKLSEIDPAGFEDLPNLQEVYLNNNELTAVPSLGAASSHVVSLFLQHNKIRSVEGSQLKAYLSLEVLDLSLNNITEVRNTCFPHGPPIKELNLAGNRIGTLELGAFDGLSRSLLTLRLSKNRITQLPVRAFKLPRLTQLDLNRNRIRLIEGLTFQGLNSLEVLKLQRNNISKLTDGAFWGLSKMHVLHLEYNSLVEVNSGSLYGLTALHQLHLSNNSIARIHRKGWSFCQKLHELVLSFNNLTRLDEESLAELSSLSVLRLSHNSISHIAEGAFKGLRSLRVLDLDHNEISGTIEDTSGAFSGLDSLSKLTLFGNKIKSVAKRAFSGLEGLEHLNLGGNAIRSVQFDAFVKMKNLKELHISSDSFLCDCQLKWLPPWLIGRMLQAFVTATCAHPESLKGQSIFSVPPESFVCDDFLKPQIITQPETTMAMVGKDIRFTCSAASSSSSPMTFAWKKDNEVLTNADMENFVHVHAQDGEVMEYTTILHLRQVTFGHEGRYQCVITNHFGSTYSHKARLTVNVLPSFTKTPHDITIRTTTMARLECAATGHPNPQIAWQKDGGTDFPAARERRMHVMPDDDVFFITDVKIDDAGVYSCTAQNSAGSISANATLTVLETPSLVVPLEDRVVSVGETVALQCKATGNPPPRITWFKGDRPLSLTERHHLTPDNQLLVVQNVVAEDAGRYTCEMSNTLGTERAHSQLSVLPAAGCRKDGTTVGIFTIAVVSSIVLTSLVWVCIIYQTRKKSEEYSVTNTDETVVPPDVPSYLSSQGTLSDRQETVVRTEGGPQANGHIESNGVCPRDASHFPEPDTHSVACRQPKLCAGSAYHKEPWKAMEKAEGTPGPHKMEHGGRVVCSDCNTEVDCYSRGQAFHPQPVSRDSAQPSAPNGPEPGGSDQEHSPHHQCSRTAAGSCPECQGSLYPSNHDRMLTAVKKKPMASLDGKGDSSWTLARLYHPDSTELQPASSLTSGSPERAEAQYLLVSNGHLPKACDASPESTPLTGQLPGKQRVPLLLAPKS</sequence>
<proteinExistence type="evidence at protein level"/>
<gene>
    <name evidence="8" type="primary">LRIG1</name>
    <name type="synonym">LIG1</name>
</gene>
<feature type="signal peptide" evidence="1">
    <location>
        <begin position="1"/>
        <end position="34"/>
    </location>
</feature>
<feature type="chain" id="PRO_0000014827" description="Leucine-rich repeats and immunoglobulin-like domains protein 1">
    <location>
        <begin position="35"/>
        <end position="1093"/>
    </location>
</feature>
<feature type="topological domain" description="Extracellular" evidence="1">
    <location>
        <begin position="35"/>
        <end position="794"/>
    </location>
</feature>
<feature type="transmembrane region" description="Helical" evidence="1">
    <location>
        <begin position="795"/>
        <end position="815"/>
    </location>
</feature>
<feature type="topological domain" description="Cytoplasmic" evidence="1">
    <location>
        <begin position="816"/>
        <end position="1093"/>
    </location>
</feature>
<feature type="domain" description="LRRNT">
    <location>
        <begin position="35"/>
        <end position="68"/>
    </location>
</feature>
<feature type="repeat" description="LRR 1">
    <location>
        <begin position="69"/>
        <end position="90"/>
    </location>
</feature>
<feature type="repeat" description="LRR 2">
    <location>
        <begin position="93"/>
        <end position="114"/>
    </location>
</feature>
<feature type="repeat" description="LRR 3">
    <location>
        <begin position="116"/>
        <end position="137"/>
    </location>
</feature>
<feature type="repeat" description="LRR 4">
    <location>
        <begin position="140"/>
        <end position="161"/>
    </location>
</feature>
<feature type="repeat" description="LRR 5">
    <location>
        <begin position="164"/>
        <end position="185"/>
    </location>
</feature>
<feature type="repeat" description="LRR 6">
    <location>
        <begin position="189"/>
        <end position="210"/>
    </location>
</feature>
<feature type="repeat" description="LRR 7">
    <location>
        <begin position="212"/>
        <end position="233"/>
    </location>
</feature>
<feature type="repeat" description="LRR 8">
    <location>
        <begin position="236"/>
        <end position="257"/>
    </location>
</feature>
<feature type="repeat" description="LRR 9">
    <location>
        <begin position="260"/>
        <end position="281"/>
    </location>
</feature>
<feature type="repeat" description="LRR 10">
    <location>
        <begin position="284"/>
        <end position="305"/>
    </location>
</feature>
<feature type="repeat" description="LRR 11">
    <location>
        <begin position="308"/>
        <end position="329"/>
    </location>
</feature>
<feature type="repeat" description="LRR 12">
    <location>
        <begin position="332"/>
        <end position="353"/>
    </location>
</feature>
<feature type="repeat" description="LRR 13">
    <location>
        <begin position="356"/>
        <end position="378"/>
    </location>
</feature>
<feature type="repeat" description="LRR 14">
    <location>
        <begin position="383"/>
        <end position="404"/>
    </location>
</feature>
<feature type="repeat" description="LRR 15">
    <location>
        <begin position="407"/>
        <end position="428"/>
    </location>
</feature>
<feature type="domain" description="LRRCT">
    <location>
        <begin position="440"/>
        <end position="491"/>
    </location>
</feature>
<feature type="domain" description="Ig-like C2-type 1">
    <location>
        <begin position="495"/>
        <end position="594"/>
    </location>
</feature>
<feature type="domain" description="Ig-like C2-type 2">
    <location>
        <begin position="599"/>
        <end position="688"/>
    </location>
</feature>
<feature type="domain" description="Ig-like C2-type 3">
    <location>
        <begin position="693"/>
        <end position="779"/>
    </location>
</feature>
<feature type="region of interest" description="Disordered" evidence="3">
    <location>
        <begin position="946"/>
        <end position="983"/>
    </location>
</feature>
<feature type="region of interest" description="Disordered" evidence="3">
    <location>
        <begin position="1063"/>
        <end position="1093"/>
    </location>
</feature>
<feature type="glycosylation site" description="N-linked (GlcNAc...) asparagine" evidence="1 7 13">
    <location>
        <position position="74"/>
    </location>
</feature>
<feature type="glycosylation site" description="N-linked (GlcNAc...) asparagine" evidence="1 7 13">
    <location>
        <position position="150"/>
    </location>
</feature>
<feature type="glycosylation site" description="N-linked (GlcNAc...) asparagine" evidence="1 7 13">
    <location>
        <position position="246"/>
    </location>
</feature>
<feature type="glycosylation site" description="N-linked (GlcNAc...) asparagine" evidence="1 7 13">
    <location>
        <position position="292"/>
    </location>
</feature>
<feature type="glycosylation site" description="N-linked (GlcNAc...) asparagine" evidence="1 7 13">
    <location>
        <position position="318"/>
    </location>
</feature>
<feature type="glycosylation site" description="N-linked (GlcNAc...) asparagine" evidence="1 7 13">
    <location>
        <position position="684"/>
    </location>
</feature>
<feature type="disulfide bond" evidence="7 13">
    <location>
        <begin position="45"/>
        <end position="54"/>
    </location>
</feature>
<feature type="disulfide bond" evidence="7 13">
    <location>
        <begin position="444"/>
        <end position="468"/>
    </location>
</feature>
<feature type="disulfide bond" evidence="7 13">
    <location>
        <begin position="446"/>
        <end position="489"/>
    </location>
</feature>
<feature type="disulfide bond" evidence="2 7 14">
    <location>
        <begin position="516"/>
        <end position="577"/>
    </location>
</feature>
<feature type="disulfide bond" evidence="2 7 14">
    <location>
        <begin position="620"/>
        <end position="672"/>
    </location>
</feature>
<feature type="disulfide bond" evidence="2 7 14">
    <location>
        <begin position="714"/>
        <end position="763"/>
    </location>
</feature>
<feature type="splice variant" id="VSP_011730" description="In isoform 2." evidence="9">
    <original>L</original>
    <variation>LLLLEPSQSAGCSSPSQPHMSAGGR</variation>
    <location>
        <position position="387"/>
    </location>
</feature>
<feature type="splice variant" id="VSP_011731" description="In isoform 2." evidence="9">
    <original>RERRMHVMPDDDVFFITDVKIDDAGVYSCTAQNSAGSISANATLTVLE</original>
    <variation>Q</variation>
    <location>
        <begin position="644"/>
        <end position="691"/>
    </location>
</feature>
<feature type="sequence variant" id="VAR_049889" description="In dbSNP:rs1403626.">
    <original>L</original>
    <variation>V</variation>
    <location>
        <position position="24"/>
    </location>
</feature>
<feature type="sequence variant" id="VAR_031581" description="In dbSNP:rs2306272." evidence="4 6">
    <original>M</original>
    <variation>V</variation>
    <location>
        <position position="615"/>
    </location>
</feature>
<feature type="sequence variant" id="VAR_031582" description="In dbSNP:rs9877201.">
    <original>G</original>
    <variation>S</variation>
    <location>
        <position position="926"/>
    </location>
</feature>
<feature type="sequence variant" id="VAR_031583" description="In dbSNP:rs332373.">
    <original>A</original>
    <variation>T</variation>
    <location>
        <position position="957"/>
    </location>
</feature>
<feature type="sequence variant" id="VAR_049890" description="In dbSNP:rs2279289.">
    <original>G</original>
    <variation>A</variation>
    <location>
        <position position="993"/>
    </location>
</feature>
<feature type="sequence variant" id="VAR_031584" description="In dbSNP:rs332374.">
    <original>P</original>
    <variation>R</variation>
    <location>
        <position position="1031"/>
    </location>
</feature>
<feature type="sequence variant" id="VAR_031585" description="In dbSNP:rs2279290.">
    <original>Q</original>
    <variation>P</variation>
    <location>
        <position position="1053"/>
    </location>
</feature>
<feature type="sequence conflict" description="In Ref. 1; AAK62357 and 3; AAH71561." evidence="11" ref="1 3">
    <original>LLL</original>
    <variation>VLV</variation>
    <location>
        <begin position="24"/>
        <end position="26"/>
    </location>
</feature>
<feature type="sequence conflict" description="In Ref. 3; AAH71561." evidence="11" ref="3">
    <original>L</original>
    <variation>F</variation>
    <location>
        <position position="80"/>
    </location>
</feature>
<feature type="sequence conflict" description="In Ref. 4; CAB56036." evidence="11" ref="4">
    <original>TT</original>
    <variation>VR</variation>
    <location>
        <begin position="612"/>
        <end position="613"/>
    </location>
</feature>
<feature type="sequence conflict" description="In Ref. 2; BAB40659." evidence="11" ref="2">
    <original>G</original>
    <variation>GA</variation>
    <location>
        <position position="861"/>
    </location>
</feature>
<feature type="sequence conflict" description="In Ref. 2; BAB40659." evidence="11" ref="2">
    <original>M</original>
    <variation>I</variation>
    <location>
        <position position="911"/>
    </location>
</feature>
<feature type="strand" evidence="15">
    <location>
        <begin position="43"/>
        <end position="48"/>
    </location>
</feature>
<feature type="strand" evidence="15">
    <location>
        <begin position="51"/>
        <end position="53"/>
    </location>
</feature>
<feature type="strand" evidence="15">
    <location>
        <begin position="72"/>
        <end position="74"/>
    </location>
</feature>
<feature type="helix" evidence="15">
    <location>
        <begin position="85"/>
        <end position="87"/>
    </location>
</feature>
<feature type="strand" evidence="15">
    <location>
        <begin position="96"/>
        <end position="98"/>
    </location>
</feature>
<feature type="helix" evidence="15">
    <location>
        <begin position="111"/>
        <end position="116"/>
    </location>
</feature>
<feature type="strand" evidence="15">
    <location>
        <begin position="119"/>
        <end position="121"/>
    </location>
</feature>
<feature type="helix" evidence="15">
    <location>
        <begin position="132"/>
        <end position="135"/>
    </location>
</feature>
<feature type="strand" evidence="15">
    <location>
        <begin position="143"/>
        <end position="145"/>
    </location>
</feature>
<feature type="helix" evidence="15">
    <location>
        <begin position="156"/>
        <end position="158"/>
    </location>
</feature>
<feature type="strand" evidence="15">
    <location>
        <begin position="161"/>
        <end position="163"/>
    </location>
</feature>
<feature type="strand" evidence="15">
    <location>
        <begin position="166"/>
        <end position="169"/>
    </location>
</feature>
<feature type="turn" evidence="15">
    <location>
        <begin position="180"/>
        <end position="183"/>
    </location>
</feature>
<feature type="helix" evidence="15">
    <location>
        <begin position="184"/>
        <end position="186"/>
    </location>
</feature>
<feature type="turn" evidence="15">
    <location>
        <begin position="187"/>
        <end position="189"/>
    </location>
</feature>
<feature type="strand" evidence="15">
    <location>
        <begin position="192"/>
        <end position="194"/>
    </location>
</feature>
<feature type="strand" evidence="15">
    <location>
        <begin position="215"/>
        <end position="217"/>
    </location>
</feature>
<feature type="turn" evidence="15">
    <location>
        <begin position="228"/>
        <end position="233"/>
    </location>
</feature>
<feature type="strand" evidence="15">
    <location>
        <begin position="239"/>
        <end position="241"/>
    </location>
</feature>
<feature type="turn" evidence="15">
    <location>
        <begin position="252"/>
        <end position="257"/>
    </location>
</feature>
<feature type="strand" evidence="15">
    <location>
        <begin position="263"/>
        <end position="265"/>
    </location>
</feature>
<feature type="helix" evidence="15">
    <location>
        <begin position="276"/>
        <end position="279"/>
    </location>
</feature>
<feature type="strand" evidence="15">
    <location>
        <begin position="287"/>
        <end position="289"/>
    </location>
</feature>
<feature type="helix" evidence="15">
    <location>
        <begin position="301"/>
        <end position="305"/>
    </location>
</feature>
<feature type="strand" evidence="15">
    <location>
        <begin position="311"/>
        <end position="313"/>
    </location>
</feature>
<feature type="turn" evidence="15">
    <location>
        <begin position="324"/>
        <end position="329"/>
    </location>
</feature>
<feature type="strand" evidence="15">
    <location>
        <begin position="335"/>
        <end position="337"/>
    </location>
</feature>
<feature type="turn" evidence="15">
    <location>
        <begin position="348"/>
        <end position="353"/>
    </location>
</feature>
<feature type="strand" evidence="15">
    <location>
        <begin position="359"/>
        <end position="361"/>
    </location>
</feature>
<feature type="helix" evidence="15">
    <location>
        <begin position="369"/>
        <end position="372"/>
    </location>
</feature>
<feature type="turn" evidence="15">
    <location>
        <begin position="377"/>
        <end position="380"/>
    </location>
</feature>
<feature type="strand" evidence="15">
    <location>
        <begin position="386"/>
        <end position="388"/>
    </location>
</feature>
<feature type="helix" evidence="15">
    <location>
        <begin position="399"/>
        <end position="402"/>
    </location>
</feature>
<feature type="strand" evidence="15">
    <location>
        <begin position="410"/>
        <end position="412"/>
    </location>
</feature>
<feature type="turn" evidence="15">
    <location>
        <begin position="423"/>
        <end position="428"/>
    </location>
</feature>
<feature type="strand" evidence="15">
    <location>
        <begin position="434"/>
        <end position="443"/>
    </location>
</feature>
<feature type="turn" evidence="15">
    <location>
        <begin position="446"/>
        <end position="450"/>
    </location>
</feature>
<feature type="helix" evidence="15">
    <location>
        <begin position="451"/>
        <end position="457"/>
    </location>
</feature>
<feature type="strand" evidence="15">
    <location>
        <begin position="464"/>
        <end position="471"/>
    </location>
</feature>
<feature type="turn" evidence="15">
    <location>
        <begin position="479"/>
        <end position="481"/>
    </location>
</feature>
<feature type="helix" evidence="15">
    <location>
        <begin position="484"/>
        <end position="486"/>
    </location>
</feature>
<feature type="strand" evidence="16">
    <location>
        <begin position="495"/>
        <end position="499"/>
    </location>
</feature>
<feature type="strand" evidence="16">
    <location>
        <begin position="504"/>
        <end position="507"/>
    </location>
</feature>
<feature type="strand" evidence="16">
    <location>
        <begin position="512"/>
        <end position="524"/>
    </location>
</feature>
<feature type="strand" evidence="16">
    <location>
        <begin position="527"/>
        <end position="532"/>
    </location>
</feature>
<feature type="strand" evidence="16">
    <location>
        <begin position="541"/>
        <end position="548"/>
    </location>
</feature>
<feature type="strand" evidence="16">
    <location>
        <begin position="556"/>
        <end position="564"/>
    </location>
</feature>
<feature type="helix" evidence="16">
    <location>
        <begin position="569"/>
        <end position="571"/>
    </location>
</feature>
<feature type="strand" evidence="16">
    <location>
        <begin position="573"/>
        <end position="580"/>
    </location>
</feature>
<feature type="strand" evidence="16">
    <location>
        <begin position="585"/>
        <end position="587"/>
    </location>
</feature>
<feature type="strand" evidence="16">
    <location>
        <begin position="591"/>
        <end position="603"/>
    </location>
</feature>
<feature type="strand" evidence="16">
    <location>
        <begin position="608"/>
        <end position="611"/>
    </location>
</feature>
<feature type="strand" evidence="16">
    <location>
        <begin position="616"/>
        <end position="619"/>
    </location>
</feature>
<feature type="strand" evidence="16">
    <location>
        <begin position="621"/>
        <end position="626"/>
    </location>
</feature>
<feature type="strand" evidence="16">
    <location>
        <begin position="629"/>
        <end position="634"/>
    </location>
</feature>
<feature type="helix" evidence="16">
    <location>
        <begin position="641"/>
        <end position="644"/>
    </location>
</feature>
<feature type="strand" evidence="16">
    <location>
        <begin position="648"/>
        <end position="650"/>
    </location>
</feature>
<feature type="turn" evidence="16">
    <location>
        <begin position="652"/>
        <end position="654"/>
    </location>
</feature>
<feature type="strand" evidence="16">
    <location>
        <begin position="656"/>
        <end position="661"/>
    </location>
</feature>
<feature type="helix" evidence="16">
    <location>
        <begin position="664"/>
        <end position="666"/>
    </location>
</feature>
<feature type="strand" evidence="16">
    <location>
        <begin position="668"/>
        <end position="675"/>
    </location>
</feature>
<feature type="strand" evidence="16">
    <location>
        <begin position="680"/>
        <end position="697"/>
    </location>
</feature>
<feature type="strand" evidence="16">
    <location>
        <begin position="702"/>
        <end position="705"/>
    </location>
</feature>
<feature type="strand" evidence="16">
    <location>
        <begin position="710"/>
        <end position="713"/>
    </location>
</feature>
<feature type="strand" evidence="16">
    <location>
        <begin position="716"/>
        <end position="720"/>
    </location>
</feature>
<feature type="strand" evidence="16">
    <location>
        <begin position="723"/>
        <end position="728"/>
    </location>
</feature>
<feature type="strand" evidence="16">
    <location>
        <begin position="739"/>
        <end position="741"/>
    </location>
</feature>
<feature type="strand" evidence="16">
    <location>
        <begin position="747"/>
        <end position="750"/>
    </location>
</feature>
<feature type="helix" evidence="16">
    <location>
        <begin position="755"/>
        <end position="757"/>
    </location>
</feature>
<feature type="strand" evidence="16">
    <location>
        <begin position="759"/>
        <end position="767"/>
    </location>
</feature>
<feature type="strand" evidence="16">
    <location>
        <begin position="770"/>
        <end position="781"/>
    </location>
</feature>
<evidence type="ECO:0000255" key="1"/>
<evidence type="ECO:0000255" key="2">
    <source>
        <dbReference type="PROSITE-ProRule" id="PRU00114"/>
    </source>
</evidence>
<evidence type="ECO:0000256" key="3">
    <source>
        <dbReference type="SAM" id="MobiDB-lite"/>
    </source>
</evidence>
<evidence type="ECO:0000269" key="4">
    <source>
    </source>
</evidence>
<evidence type="ECO:0000269" key="5">
    <source>
    </source>
</evidence>
<evidence type="ECO:0000269" key="6">
    <source>
    </source>
</evidence>
<evidence type="ECO:0000269" key="7">
    <source>
    </source>
</evidence>
<evidence type="ECO:0000303" key="8">
    <source>
    </source>
</evidence>
<evidence type="ECO:0000303" key="9">
    <source>
    </source>
</evidence>
<evidence type="ECO:0000303" key="10">
    <source ref="2"/>
</evidence>
<evidence type="ECO:0000305" key="11"/>
<evidence type="ECO:0000305" key="12">
    <source>
    </source>
</evidence>
<evidence type="ECO:0007744" key="13">
    <source>
        <dbReference type="PDB" id="4U7L"/>
    </source>
</evidence>
<evidence type="ECO:0007744" key="14">
    <source>
        <dbReference type="PDB" id="4U7M"/>
    </source>
</evidence>
<evidence type="ECO:0007829" key="15">
    <source>
        <dbReference type="PDB" id="4U7L"/>
    </source>
</evidence>
<evidence type="ECO:0007829" key="16">
    <source>
        <dbReference type="PDB" id="4U7M"/>
    </source>
</evidence>
<keyword id="KW-0002">3D-structure</keyword>
<keyword id="KW-0025">Alternative splicing</keyword>
<keyword id="KW-1003">Cell membrane</keyword>
<keyword id="KW-1015">Disulfide bond</keyword>
<keyword id="KW-0325">Glycoprotein</keyword>
<keyword id="KW-0393">Immunoglobulin domain</keyword>
<keyword id="KW-0433">Leucine-rich repeat</keyword>
<keyword id="KW-0472">Membrane</keyword>
<keyword id="KW-1267">Proteomics identification</keyword>
<keyword id="KW-1185">Reference proteome</keyword>
<keyword id="KW-0677">Repeat</keyword>
<keyword id="KW-0732">Signal</keyword>
<keyword id="KW-0812">Transmembrane</keyword>
<keyword id="KW-1133">Transmembrane helix</keyword>
<reference key="1">
    <citation type="journal article" date="2001" name="Biochem. Biophys. Res. Commun.">
        <title>Cloning, characterization, and expression of human LIG1.</title>
        <authorList>
            <person name="Nilsson J."/>
            <person name="Vallbo C."/>
            <person name="Guo D."/>
            <person name="Golovleva I."/>
            <person name="Hallberg B."/>
            <person name="Henriksson R."/>
            <person name="Hedman H."/>
        </authorList>
    </citation>
    <scope>NUCLEOTIDE SEQUENCE [MRNA] (ISOFORM 1)</scope>
    <scope>TISSUE SPECIFICITY</scope>
    <scope>VARIANT VAL-615</scope>
</reference>
<reference key="2">
    <citation type="submission" date="2000-10" db="EMBL/GenBank/DDBJ databases">
        <title>Human membrane glycoprotein LIG-1.</title>
        <authorList>
            <person name="Suzuki Y."/>
        </authorList>
    </citation>
    <scope>NUCLEOTIDE SEQUENCE [MRNA] (ISOFORM 1)</scope>
</reference>
<reference key="3">
    <citation type="journal article" date="2004" name="Genome Res.">
        <title>The status, quality, and expansion of the NIH full-length cDNA project: the Mammalian Gene Collection (MGC).</title>
        <authorList>
            <consortium name="The MGC Project Team"/>
        </authorList>
    </citation>
    <scope>NUCLEOTIDE SEQUENCE [LARGE SCALE MRNA] (ISOFORM 2)</scope>
    <source>
        <tissue>Lymph</tissue>
        <tissue>Placenta</tissue>
    </source>
</reference>
<reference key="4">
    <citation type="journal article" date="2007" name="BMC Genomics">
        <title>The full-ORF clone resource of the German cDNA consortium.</title>
        <authorList>
            <person name="Bechtel S."/>
            <person name="Rosenfelder H."/>
            <person name="Duda A."/>
            <person name="Schmidt C.P."/>
            <person name="Ernst U."/>
            <person name="Wellenreuther R."/>
            <person name="Mehrle A."/>
            <person name="Schuster C."/>
            <person name="Bahr A."/>
            <person name="Bloecker H."/>
            <person name="Heubner D."/>
            <person name="Hoerlein A."/>
            <person name="Michel G."/>
            <person name="Wedler H."/>
            <person name="Koehrer K."/>
            <person name="Ottenwaelder B."/>
            <person name="Poustka A."/>
            <person name="Wiemann S."/>
            <person name="Schupp I."/>
        </authorList>
    </citation>
    <scope>NUCLEOTIDE SEQUENCE [LARGE SCALE MRNA] OF 611-1093</scope>
    <scope>VARIANT VAL-615</scope>
    <source>
        <tissue>Uterus</tissue>
    </source>
</reference>
<reference key="5">
    <citation type="journal article" date="2004" name="EMBO J.">
        <title>LRIG1 restricts growth factor signaling by enhancing receptor ubiquitylation and degradation.</title>
        <authorList>
            <person name="Gur G."/>
            <person name="Rubin C."/>
            <person name="Katz M."/>
            <person name="Amit I."/>
            <person name="Citri A."/>
            <person name="Nilsson J."/>
            <person name="Amariglio N."/>
            <person name="Henriksson R."/>
            <person name="Rechavi G."/>
            <person name="Hedman H."/>
            <person name="Wides R."/>
            <person name="Yarden Y."/>
        </authorList>
    </citation>
    <scope>FUNCTION</scope>
    <scope>SUBCELLULAR LOCATION</scope>
    <scope>TOPOLOGY</scope>
    <scope>INDUCTION</scope>
    <scope>INTERACTION WITH EGFR; ERBB2; ERBB3 AND ERBB4</scope>
</reference>
<reference evidence="13 14" key="6">
    <citation type="journal article" date="2015" name="J. Mol. Biol.">
        <title>LRIG1 extracellular domain: structure and function analysis.</title>
        <authorList>
            <person name="Xu Y."/>
            <person name="Soo P."/>
            <person name="Walker F."/>
            <person name="Zhang H.H."/>
            <person name="Redpath N."/>
            <person name="Tan C.W."/>
            <person name="Nicola N.A."/>
            <person name="Adams T.E."/>
            <person name="Garrett T.P."/>
            <person name="Zhang J.G."/>
            <person name="Burgess A.W."/>
        </authorList>
    </citation>
    <scope>X-RAY CRYSTALLOGRAPHY (2.30 ANGSTROMS) OF 42-781</scope>
    <scope>INTERACTION WITH EGFR</scope>
    <scope>DOMAIN</scope>
    <scope>GLYCOSYLATION AT ASN-74; ASN-150; ASN-246; ASN-292; ASN-318 AND ASN-684</scope>
    <scope>DISULFIDE BONDS</scope>
</reference>
<accession>Q96JA1</accession>
<accession>Q6IQ51</accession>
<accession>Q96CF9</accession>
<accession>Q9BYB8</accession>
<accession>Q9UFI4</accession>